<comment type="function">
    <text evidence="1">Involved in the degradation of chitin. ChbG is essential for growth on the acetylated chitooligosaccharides chitobiose and chitotriose but is dispensable for growth on cellobiose and chitosan dimer, the deacetylated form of chitobiose. Deacetylation of chitobiose-6-P and chitotriose-6-P is necessary for both the activation of the chb promoter by the regulatory protein ChbR and the hydrolysis of phosphorylated beta-glucosides by the phospho-beta-glucosidase ChbF. Catalyzes the removal of only one acetyl group from chitobiose-6-P to yield monoacetylchitobiose-6-P, the inducer of ChbR and the substrate of ChbF.</text>
</comment>
<comment type="catalytic activity">
    <reaction evidence="1">
        <text>N,N'-diacetylchitobiose + H2O = N-acetyl-beta-D-glucosaminyl-(1-&gt;4)-D-glucosamine + acetate</text>
        <dbReference type="Rhea" id="RHEA:27469"/>
        <dbReference type="ChEBI" id="CHEBI:15377"/>
        <dbReference type="ChEBI" id="CHEBI:28681"/>
        <dbReference type="ChEBI" id="CHEBI:30089"/>
        <dbReference type="ChEBI" id="CHEBI:59910"/>
        <dbReference type="EC" id="3.5.1.105"/>
    </reaction>
</comment>
<comment type="catalytic activity">
    <reaction evidence="1">
        <text>diacetylchitobiose-6'-phosphate + H2O = N'-monoacetylchitobiose-6'-phosphate + acetate</text>
        <dbReference type="Rhea" id="RHEA:35083"/>
        <dbReference type="ChEBI" id="CHEBI:15377"/>
        <dbReference type="ChEBI" id="CHEBI:30089"/>
        <dbReference type="ChEBI" id="CHEBI:64883"/>
        <dbReference type="ChEBI" id="CHEBI:71315"/>
    </reaction>
</comment>
<comment type="cofactor">
    <cofactor evidence="1">
        <name>Mg(2+)</name>
        <dbReference type="ChEBI" id="CHEBI:18420"/>
    </cofactor>
</comment>
<comment type="pathway">
    <text evidence="1">Glycan degradation; chitin degradation.</text>
</comment>
<comment type="subunit">
    <text evidence="1">Homodimer.</text>
</comment>
<comment type="subcellular location">
    <subcellularLocation>
        <location evidence="1">Cytoplasm</location>
    </subcellularLocation>
</comment>
<comment type="similarity">
    <text evidence="1">Belongs to the YdjC deacetylase family. ChbG subfamily.</text>
</comment>
<sequence length="253" mass="28171">MEKLLIVNADDFGLCKGQNYGIIDAFRNGVVSSTTAMMNSVDINHAAELSAQYPALPVGMHFVLTFGRPLTAMPSLTDANGELGKWLWQRAGAGTLDLNEIAQELECQFERFSAVFGRPPTHIDSHHHVHMLPQIYPLVAAFAREKSLPLRIDRHEVQQHGLTLDNPRSSEWFNAGFYGENLSEPSFLQLLEHADQQGVNSLEIMCHPAFIDQTLMTSGYCYPRLTELAILTSPTLKPAIAQRGYRLGSFLDC</sequence>
<accession>A4TL15</accession>
<evidence type="ECO:0000255" key="1">
    <source>
        <dbReference type="HAMAP-Rule" id="MF_01246"/>
    </source>
</evidence>
<keyword id="KW-0119">Carbohydrate metabolism</keyword>
<keyword id="KW-0146">Chitin degradation</keyword>
<keyword id="KW-0963">Cytoplasm</keyword>
<keyword id="KW-0378">Hydrolase</keyword>
<keyword id="KW-0460">Magnesium</keyword>
<keyword id="KW-0479">Metal-binding</keyword>
<keyword id="KW-0624">Polysaccharide degradation</keyword>
<gene>
    <name evidence="1" type="primary">chbG</name>
    <name type="ordered locus">YPDSF_1592</name>
</gene>
<reference key="1">
    <citation type="submission" date="2007-02" db="EMBL/GenBank/DDBJ databases">
        <title>Complete sequence of chromosome of Yersinia pestis Pestoides F.</title>
        <authorList>
            <consortium name="US DOE Joint Genome Institute"/>
            <person name="Copeland A."/>
            <person name="Lucas S."/>
            <person name="Lapidus A."/>
            <person name="Barry K."/>
            <person name="Detter J.C."/>
            <person name="Glavina del Rio T."/>
            <person name="Hammon N."/>
            <person name="Israni S."/>
            <person name="Dalin E."/>
            <person name="Tice H."/>
            <person name="Pitluck S."/>
            <person name="Di Bartolo G."/>
            <person name="Chain P."/>
            <person name="Malfatti S."/>
            <person name="Shin M."/>
            <person name="Vergez L."/>
            <person name="Schmutz J."/>
            <person name="Larimer F."/>
            <person name="Land M."/>
            <person name="Hauser L."/>
            <person name="Worsham P."/>
            <person name="Chu M."/>
            <person name="Bearden S."/>
            <person name="Garcia E."/>
            <person name="Richardson P."/>
        </authorList>
    </citation>
    <scope>NUCLEOTIDE SEQUENCE [LARGE SCALE GENOMIC DNA]</scope>
    <source>
        <strain>Pestoides F</strain>
    </source>
</reference>
<proteinExistence type="inferred from homology"/>
<name>CHBG_YERPP</name>
<protein>
    <recommendedName>
        <fullName evidence="1">Chitooligosaccharide deacetylase</fullName>
        <shortName evidence="1">COD</shortName>
        <ecNumber evidence="1">3.5.1.105</ecNumber>
    </recommendedName>
    <alternativeName>
        <fullName evidence="1">Chitin disaccharide deacetylase</fullName>
    </alternativeName>
    <alternativeName>
        <fullName evidence="1">Chitobiose deacetylase</fullName>
    </alternativeName>
    <alternativeName>
        <fullName evidence="1">Chitobiose-6P deacetylase</fullName>
    </alternativeName>
    <alternativeName>
        <fullName evidence="1">Chitotriose deacetylase</fullName>
    </alternativeName>
    <alternativeName>
        <fullName evidence="1">Chitotriose-6P deacetylase</fullName>
    </alternativeName>
</protein>
<dbReference type="EC" id="3.5.1.105" evidence="1"/>
<dbReference type="EMBL" id="CP000668">
    <property type="protein sequence ID" value="ABP39977.1"/>
    <property type="molecule type" value="Genomic_DNA"/>
</dbReference>
<dbReference type="RefSeq" id="WP_002212244.1">
    <property type="nucleotide sequence ID" value="NZ_CP009715.1"/>
</dbReference>
<dbReference type="SMR" id="A4TL15"/>
<dbReference type="GeneID" id="57976011"/>
<dbReference type="KEGG" id="ypp:YPDSF_1592"/>
<dbReference type="PATRIC" id="fig|386656.14.peg.2175"/>
<dbReference type="UniPathway" id="UPA00349"/>
<dbReference type="GO" id="GO:0005737">
    <property type="term" value="C:cytoplasm"/>
    <property type="evidence" value="ECO:0007669"/>
    <property type="project" value="UniProtKB-SubCell"/>
</dbReference>
<dbReference type="GO" id="GO:0036311">
    <property type="term" value="F:chitin disaccharide deacetylase activity"/>
    <property type="evidence" value="ECO:0007669"/>
    <property type="project" value="UniProtKB-UniRule"/>
</dbReference>
<dbReference type="GO" id="GO:0019213">
    <property type="term" value="F:deacetylase activity"/>
    <property type="evidence" value="ECO:0007669"/>
    <property type="project" value="TreeGrafter"/>
</dbReference>
<dbReference type="GO" id="GO:0046872">
    <property type="term" value="F:metal ion binding"/>
    <property type="evidence" value="ECO:0007669"/>
    <property type="project" value="UniProtKB-KW"/>
</dbReference>
<dbReference type="GO" id="GO:0006032">
    <property type="term" value="P:chitin catabolic process"/>
    <property type="evidence" value="ECO:0007669"/>
    <property type="project" value="UniProtKB-UniPathway"/>
</dbReference>
<dbReference type="GO" id="GO:0052777">
    <property type="term" value="P:diacetylchitobiose catabolic process"/>
    <property type="evidence" value="ECO:0007669"/>
    <property type="project" value="UniProtKB-UniRule"/>
</dbReference>
<dbReference type="GO" id="GO:0000272">
    <property type="term" value="P:polysaccharide catabolic process"/>
    <property type="evidence" value="ECO:0007669"/>
    <property type="project" value="UniProtKB-UniRule"/>
</dbReference>
<dbReference type="CDD" id="cd10803">
    <property type="entry name" value="YdjC_EF3048_like"/>
    <property type="match status" value="1"/>
</dbReference>
<dbReference type="FunFam" id="3.20.20.370:FF:000001">
    <property type="entry name" value="Chitooligosaccharide deacetylase"/>
    <property type="match status" value="1"/>
</dbReference>
<dbReference type="Gene3D" id="3.20.20.370">
    <property type="entry name" value="Glycoside hydrolase/deacetylase"/>
    <property type="match status" value="1"/>
</dbReference>
<dbReference type="HAMAP" id="MF_01246">
    <property type="entry name" value="COD"/>
    <property type="match status" value="1"/>
</dbReference>
<dbReference type="InterPro" id="IPR022948">
    <property type="entry name" value="COD_ChbG_bac"/>
</dbReference>
<dbReference type="InterPro" id="IPR011330">
    <property type="entry name" value="Glyco_hydro/deAcase_b/a-brl"/>
</dbReference>
<dbReference type="InterPro" id="IPR006879">
    <property type="entry name" value="YdjC-like"/>
</dbReference>
<dbReference type="NCBIfam" id="NF002559">
    <property type="entry name" value="PRK02134.1"/>
    <property type="match status" value="1"/>
</dbReference>
<dbReference type="PANTHER" id="PTHR31609:SF1">
    <property type="entry name" value="CARBOHYDRATE DEACETYLASE"/>
    <property type="match status" value="1"/>
</dbReference>
<dbReference type="PANTHER" id="PTHR31609">
    <property type="entry name" value="YDJC DEACETYLASE FAMILY MEMBER"/>
    <property type="match status" value="1"/>
</dbReference>
<dbReference type="Pfam" id="PF04794">
    <property type="entry name" value="YdjC"/>
    <property type="match status" value="1"/>
</dbReference>
<dbReference type="SUPFAM" id="SSF88713">
    <property type="entry name" value="Glycoside hydrolase/deacetylase"/>
    <property type="match status" value="1"/>
</dbReference>
<organism>
    <name type="scientific">Yersinia pestis (strain Pestoides F)</name>
    <dbReference type="NCBI Taxonomy" id="386656"/>
    <lineage>
        <taxon>Bacteria</taxon>
        <taxon>Pseudomonadati</taxon>
        <taxon>Pseudomonadota</taxon>
        <taxon>Gammaproteobacteria</taxon>
        <taxon>Enterobacterales</taxon>
        <taxon>Yersiniaceae</taxon>
        <taxon>Yersinia</taxon>
    </lineage>
</organism>
<feature type="chain" id="PRO_1000067095" description="Chitooligosaccharide deacetylase">
    <location>
        <begin position="1"/>
        <end position="253"/>
    </location>
</feature>
<feature type="binding site" evidence="1">
    <location>
        <position position="61"/>
    </location>
    <ligand>
        <name>Mg(2+)</name>
        <dbReference type="ChEBI" id="CHEBI:18420"/>
    </ligand>
</feature>
<feature type="binding site" evidence="1">
    <location>
        <position position="126"/>
    </location>
    <ligand>
        <name>Mg(2+)</name>
        <dbReference type="ChEBI" id="CHEBI:18420"/>
    </ligand>
</feature>